<accession>B5FNU5</accession>
<dbReference type="EC" id="5.1.1.7" evidence="1"/>
<dbReference type="EMBL" id="CP001144">
    <property type="protein sequence ID" value="ACH75293.1"/>
    <property type="molecule type" value="Genomic_DNA"/>
</dbReference>
<dbReference type="RefSeq" id="WP_001160671.1">
    <property type="nucleotide sequence ID" value="NC_011205.1"/>
</dbReference>
<dbReference type="SMR" id="B5FNU5"/>
<dbReference type="KEGG" id="sed:SeD_A4334"/>
<dbReference type="HOGENOM" id="CLU_053306_1_1_6"/>
<dbReference type="UniPathway" id="UPA00034">
    <property type="reaction ID" value="UER00025"/>
</dbReference>
<dbReference type="Proteomes" id="UP000008322">
    <property type="component" value="Chromosome"/>
</dbReference>
<dbReference type="GO" id="GO:0005829">
    <property type="term" value="C:cytosol"/>
    <property type="evidence" value="ECO:0007669"/>
    <property type="project" value="TreeGrafter"/>
</dbReference>
<dbReference type="GO" id="GO:0008837">
    <property type="term" value="F:diaminopimelate epimerase activity"/>
    <property type="evidence" value="ECO:0007669"/>
    <property type="project" value="UniProtKB-UniRule"/>
</dbReference>
<dbReference type="GO" id="GO:0009089">
    <property type="term" value="P:lysine biosynthetic process via diaminopimelate"/>
    <property type="evidence" value="ECO:0007669"/>
    <property type="project" value="UniProtKB-UniRule"/>
</dbReference>
<dbReference type="FunFam" id="3.10.310.10:FF:000001">
    <property type="entry name" value="Diaminopimelate epimerase"/>
    <property type="match status" value="1"/>
</dbReference>
<dbReference type="FunFam" id="3.10.310.10:FF:000002">
    <property type="entry name" value="Diaminopimelate epimerase"/>
    <property type="match status" value="1"/>
</dbReference>
<dbReference type="Gene3D" id="3.10.310.10">
    <property type="entry name" value="Diaminopimelate Epimerase, Chain A, domain 1"/>
    <property type="match status" value="2"/>
</dbReference>
<dbReference type="HAMAP" id="MF_00197">
    <property type="entry name" value="DAP_epimerase"/>
    <property type="match status" value="1"/>
</dbReference>
<dbReference type="InterPro" id="IPR018510">
    <property type="entry name" value="DAP_epimerase_AS"/>
</dbReference>
<dbReference type="InterPro" id="IPR001653">
    <property type="entry name" value="DAP_epimerase_DapF"/>
</dbReference>
<dbReference type="NCBIfam" id="TIGR00652">
    <property type="entry name" value="DapF"/>
    <property type="match status" value="1"/>
</dbReference>
<dbReference type="PANTHER" id="PTHR31689:SF0">
    <property type="entry name" value="DIAMINOPIMELATE EPIMERASE"/>
    <property type="match status" value="1"/>
</dbReference>
<dbReference type="PANTHER" id="PTHR31689">
    <property type="entry name" value="DIAMINOPIMELATE EPIMERASE, CHLOROPLASTIC"/>
    <property type="match status" value="1"/>
</dbReference>
<dbReference type="Pfam" id="PF01678">
    <property type="entry name" value="DAP_epimerase"/>
    <property type="match status" value="2"/>
</dbReference>
<dbReference type="SUPFAM" id="SSF54506">
    <property type="entry name" value="Diaminopimelate epimerase-like"/>
    <property type="match status" value="1"/>
</dbReference>
<dbReference type="PROSITE" id="PS01326">
    <property type="entry name" value="DAP_EPIMERASE"/>
    <property type="match status" value="1"/>
</dbReference>
<protein>
    <recommendedName>
        <fullName evidence="1">Diaminopimelate epimerase</fullName>
        <shortName evidence="1">DAP epimerase</shortName>
        <ecNumber evidence="1">5.1.1.7</ecNumber>
    </recommendedName>
    <alternativeName>
        <fullName evidence="1">PLP-independent amino acid racemase</fullName>
    </alternativeName>
</protein>
<reference key="1">
    <citation type="journal article" date="2011" name="J. Bacteriol.">
        <title>Comparative genomics of 28 Salmonella enterica isolates: evidence for CRISPR-mediated adaptive sublineage evolution.</title>
        <authorList>
            <person name="Fricke W.F."/>
            <person name="Mammel M.K."/>
            <person name="McDermott P.F."/>
            <person name="Tartera C."/>
            <person name="White D.G."/>
            <person name="Leclerc J.E."/>
            <person name="Ravel J."/>
            <person name="Cebula T.A."/>
        </authorList>
    </citation>
    <scope>NUCLEOTIDE SEQUENCE [LARGE SCALE GENOMIC DNA]</scope>
    <source>
        <strain>CT_02021853</strain>
    </source>
</reference>
<gene>
    <name evidence="1" type="primary">dapF</name>
    <name type="ordered locus">SeD_A4334</name>
</gene>
<name>DAPF_SALDC</name>
<sequence length="274" mass="30337">MQFSKMHGLGNDFMVVDAVTQNVFFSPELIRRLSDRHLGVGFDQLLVVEPPYDPELDFHYRIFNADGSEVSQCGNGARCFARFVRLKGLTNKRDIRVSTANGRMVLSVTEDELVRVNMGEPNFEPAQVPFRANKAEKTYIMRAAEQTILCGVVSMGNPHCVIQVDNVDTAAVETLGPVLESHERFPERANIGFMQVVRREHIRLRVYERGAGETRACGSGACAAVAVGIQQGLLAEEVRVELPGGRLDIAWKGPGHPLYMTGPAAHIYDGFIHL</sequence>
<comment type="function">
    <text evidence="1">Catalyzes the stereoinversion of LL-2,6-diaminopimelate (L,L-DAP) to meso-diaminopimelate (meso-DAP), a precursor of L-lysine and an essential component of the bacterial peptidoglycan.</text>
</comment>
<comment type="catalytic activity">
    <reaction evidence="1">
        <text>(2S,6S)-2,6-diaminopimelate = meso-2,6-diaminopimelate</text>
        <dbReference type="Rhea" id="RHEA:15393"/>
        <dbReference type="ChEBI" id="CHEBI:57609"/>
        <dbReference type="ChEBI" id="CHEBI:57791"/>
        <dbReference type="EC" id="5.1.1.7"/>
    </reaction>
</comment>
<comment type="pathway">
    <text evidence="1">Amino-acid biosynthesis; L-lysine biosynthesis via DAP pathway; DL-2,6-diaminopimelate from LL-2,6-diaminopimelate: step 1/1.</text>
</comment>
<comment type="subunit">
    <text evidence="1">Homodimer.</text>
</comment>
<comment type="subcellular location">
    <subcellularLocation>
        <location evidence="1">Cytoplasm</location>
    </subcellularLocation>
</comment>
<comment type="similarity">
    <text evidence="1">Belongs to the diaminopimelate epimerase family.</text>
</comment>
<evidence type="ECO:0000255" key="1">
    <source>
        <dbReference type="HAMAP-Rule" id="MF_00197"/>
    </source>
</evidence>
<organism>
    <name type="scientific">Salmonella dublin (strain CT_02021853)</name>
    <dbReference type="NCBI Taxonomy" id="439851"/>
    <lineage>
        <taxon>Bacteria</taxon>
        <taxon>Pseudomonadati</taxon>
        <taxon>Pseudomonadota</taxon>
        <taxon>Gammaproteobacteria</taxon>
        <taxon>Enterobacterales</taxon>
        <taxon>Enterobacteriaceae</taxon>
        <taxon>Salmonella</taxon>
    </lineage>
</organism>
<proteinExistence type="inferred from homology"/>
<keyword id="KW-0028">Amino-acid biosynthesis</keyword>
<keyword id="KW-0963">Cytoplasm</keyword>
<keyword id="KW-0413">Isomerase</keyword>
<keyword id="KW-0457">Lysine biosynthesis</keyword>
<feature type="chain" id="PRO_1000099262" description="Diaminopimelate epimerase">
    <location>
        <begin position="1"/>
        <end position="274"/>
    </location>
</feature>
<feature type="active site" description="Proton donor" evidence="1">
    <location>
        <position position="73"/>
    </location>
</feature>
<feature type="active site" description="Proton acceptor" evidence="1">
    <location>
        <position position="217"/>
    </location>
</feature>
<feature type="binding site" evidence="1">
    <location>
        <position position="11"/>
    </location>
    <ligand>
        <name>substrate</name>
    </ligand>
</feature>
<feature type="binding site" evidence="1">
    <location>
        <position position="44"/>
    </location>
    <ligand>
        <name>substrate</name>
    </ligand>
</feature>
<feature type="binding site" evidence="1">
    <location>
        <position position="64"/>
    </location>
    <ligand>
        <name>substrate</name>
    </ligand>
</feature>
<feature type="binding site" evidence="1">
    <location>
        <begin position="74"/>
        <end position="75"/>
    </location>
    <ligand>
        <name>substrate</name>
    </ligand>
</feature>
<feature type="binding site" evidence="1">
    <location>
        <position position="157"/>
    </location>
    <ligand>
        <name>substrate</name>
    </ligand>
</feature>
<feature type="binding site" evidence="1">
    <location>
        <position position="190"/>
    </location>
    <ligand>
        <name>substrate</name>
    </ligand>
</feature>
<feature type="binding site" evidence="1">
    <location>
        <begin position="208"/>
        <end position="209"/>
    </location>
    <ligand>
        <name>substrate</name>
    </ligand>
</feature>
<feature type="binding site" evidence="1">
    <location>
        <begin position="218"/>
        <end position="219"/>
    </location>
    <ligand>
        <name>substrate</name>
    </ligand>
</feature>
<feature type="site" description="Could be important to modulate the pK values of the two catalytic cysteine residues" evidence="1">
    <location>
        <position position="159"/>
    </location>
</feature>
<feature type="site" description="Could be important to modulate the pK values of the two catalytic cysteine residues" evidence="1">
    <location>
        <position position="208"/>
    </location>
</feature>
<feature type="site" description="Important for dimerization" evidence="1">
    <location>
        <position position="268"/>
    </location>
</feature>